<organism>
    <name type="scientific">Aspergillus clavatus (strain ATCC 1007 / CBS 513.65 / DSM 816 / NCTC 3887 / NRRL 1 / QM 1276 / 107)</name>
    <dbReference type="NCBI Taxonomy" id="344612"/>
    <lineage>
        <taxon>Eukaryota</taxon>
        <taxon>Fungi</taxon>
        <taxon>Dikarya</taxon>
        <taxon>Ascomycota</taxon>
        <taxon>Pezizomycotina</taxon>
        <taxon>Eurotiomycetes</taxon>
        <taxon>Eurotiomycetidae</taxon>
        <taxon>Eurotiales</taxon>
        <taxon>Aspergillaceae</taxon>
        <taxon>Aspergillus</taxon>
        <taxon>Aspergillus subgen. Fumigati</taxon>
    </lineage>
</organism>
<keyword id="KW-0963">Cytoplasm</keyword>
<keyword id="KW-0325">Glycoprotein</keyword>
<keyword id="KW-0560">Oxidoreductase</keyword>
<keyword id="KW-1185">Reference proteome</keyword>
<keyword id="KW-0732">Signal</keyword>
<accession>A1CFL3</accession>
<reference key="1">
    <citation type="journal article" date="2008" name="PLoS Genet.">
        <title>Genomic islands in the pathogenic filamentous fungus Aspergillus fumigatus.</title>
        <authorList>
            <person name="Fedorova N.D."/>
            <person name="Khaldi N."/>
            <person name="Joardar V.S."/>
            <person name="Maiti R."/>
            <person name="Amedeo P."/>
            <person name="Anderson M.J."/>
            <person name="Crabtree J."/>
            <person name="Silva J.C."/>
            <person name="Badger J.H."/>
            <person name="Albarraq A."/>
            <person name="Angiuoli S."/>
            <person name="Bussey H."/>
            <person name="Bowyer P."/>
            <person name="Cotty P.J."/>
            <person name="Dyer P.S."/>
            <person name="Egan A."/>
            <person name="Galens K."/>
            <person name="Fraser-Liggett C.M."/>
            <person name="Haas B.J."/>
            <person name="Inman J.M."/>
            <person name="Kent R."/>
            <person name="Lemieux S."/>
            <person name="Malavazi I."/>
            <person name="Orvis J."/>
            <person name="Roemer T."/>
            <person name="Ronning C.M."/>
            <person name="Sundaram J.P."/>
            <person name="Sutton G."/>
            <person name="Turner G."/>
            <person name="Venter J.C."/>
            <person name="White O.R."/>
            <person name="Whitty B.R."/>
            <person name="Youngman P."/>
            <person name="Wolfe K.H."/>
            <person name="Goldman G.H."/>
            <person name="Wortman J.R."/>
            <person name="Jiang B."/>
            <person name="Denning D.W."/>
            <person name="Nierman W.C."/>
        </authorList>
    </citation>
    <scope>NUCLEOTIDE SEQUENCE [LARGE SCALE GENOMIC DNA]</scope>
    <source>
        <strain>ATCC 1007 / CBS 513.65 / DSM 816 / NCTC 3887 / NRRL 1 / QM 1276 / 107</strain>
    </source>
</reference>
<reference key="2">
    <citation type="journal article" date="2004" name="Int. J. Epidemiol.">
        <title>Clinical trial of patulin in the common cold. 1944.</title>
        <authorList>
            <consortium name="Patulin Clinical Trials Committee, Medical Research Council"/>
        </authorList>
    </citation>
    <scope>BIOTECHNOLOGY</scope>
</reference>
<reference key="3">
    <citation type="journal article" date="2009" name="Microbiology">
        <title>Molecular cloning and functional characterization of two CYP619 cytochrome P450s involved in biosynthesis of patulin in Aspergillus clavatus.</title>
        <authorList>
            <person name="Artigot M.P."/>
            <person name="Loiseau N."/>
            <person name="Laffitte J."/>
            <person name="Mas-Reguieg L."/>
            <person name="Tadrist S."/>
            <person name="Oswald I.P."/>
            <person name="Puel O."/>
        </authorList>
    </citation>
    <scope>FUNCTION</scope>
</reference>
<reference key="4">
    <citation type="journal article" date="2012" name="Food Chem. Toxicol.">
        <title>DNA damage in organs of mice treated acutely with patulin, a known mycotoxin.</title>
        <authorList>
            <person name="de Melo F.T."/>
            <person name="de Oliveira I.M."/>
            <person name="Greggio S."/>
            <person name="Dacosta J.C."/>
            <person name="Guecheva T.N."/>
            <person name="Saffi J."/>
            <person name="Henriques J.A."/>
            <person name="Rosa R.M."/>
        </authorList>
    </citation>
    <scope>BIOTECHNOLOGY</scope>
</reference>
<reference key="5">
    <citation type="journal article" date="2016" name="Tumor Biol.">
        <title>The potential effect of patulin on mice bearing melanoma cells: an anti-tumour or carcinogenic effect?</title>
        <authorList>
            <person name="Boussabbeh M."/>
            <person name="Ben Salem I."/>
            <person name="Rjiba-Touati K."/>
            <person name="Bouyahya C."/>
            <person name="Neffati F."/>
            <person name="Najjar M.F."/>
            <person name="Bacha H."/>
            <person name="Abid-Essefi S."/>
        </authorList>
    </citation>
    <scope>BIOTECHNOLOGY</scope>
</reference>
<proteinExistence type="evidence at protein level"/>
<sequence length="198" mass="21825">MRLSTVLLGSLLGALTQAAPTGQFPGHYQSSPPPLGPSNWERNPVSVFFKVLNTQPDPDYTMLKELVTYDCTYVSLTFDNPTLHSIMPWAGTHTNIGPQAFIDIFTRVGLYWDRGPFTIDYIFGDGGNVTAWGSFTATSRTLGKTVISPWAARARVNEDNRIFYFQWMEDTFTTASSFGSDASNKTYVSNPQGGTTVA</sequence>
<name>PATF_ASPCL</name>
<protein>
    <recommendedName>
        <fullName evidence="7">Patulin synthesis protein F</fullName>
        <ecNumber evidence="1">1.-.-.-</ecNumber>
    </recommendedName>
</protein>
<feature type="signal peptide" evidence="2">
    <location>
        <begin position="1"/>
        <end position="18"/>
    </location>
</feature>
<feature type="chain" id="PRO_5002633070" description="Patulin synthesis protein F" evidence="2">
    <location>
        <begin position="19"/>
        <end position="198"/>
    </location>
</feature>
<feature type="glycosylation site" description="N-linked (GlcNAc...) asparagine" evidence="3">
    <location>
        <position position="128"/>
    </location>
</feature>
<feature type="glycosylation site" description="N-linked (GlcNAc...) asparagine" evidence="3">
    <location>
        <position position="184"/>
    </location>
</feature>
<comment type="function">
    <text evidence="1 9">Part of the gene cluster that mediates the biosynthesis of patulin, an acetate-derived tetraketide mycotoxin produced by several fungal species that shows antimicrobial properties against several bacteria (By similarity). PatF catalyzes the conversion of phyllostine into neopatulin (By similarity). The pathway begins with the synthesis of 6-methylsalicylic acid by the polyketide synthase (PKS) patK via condensation of acetate and malonate units. The 6-methylsalicylic acid decarboxylase patG then catalyzes the decarboxylation of 6-methylsalicylic acid to yield m-cresol (also known as 3-methylphenol). These first reactions occur in the cytosol. The intermediate m-cresol is then transported into the endoplasmic reticulum where the cytochrome P450 monooxygenase patH converts it to m-hydroxybenzyl alcohol, which is further converted to gentisyl alcohol by the cytochrome P450 monooxygenase patI. The oxidoreductases patJ and patO further convert gentisyl alcohol to isoepoxydon in the vacuole. PatN catalyzes then the transformation of isoepoxydon into phyllostine. The cluster protein patF is responsible for the conversion from phyllostine to neopatulin whereas the alcohol dehydrogenase patD converts neopatulin to E-ascladiol. The steps between isoepoxydon and E-ascladiol occur in the cytosol, and E-ascladiol is probably secreted to the extracellular space by one of the cluster-specific transporters patC or patM. Finally, the secreted patulin synthase patE catalyzes the conversion of E-ascladiol to patulin (Probable) (PubMed:19383676).</text>
</comment>
<comment type="catalytic activity">
    <reaction evidence="1">
        <text>phyllostine = neopatulin</text>
        <dbReference type="Rhea" id="RHEA:62220"/>
        <dbReference type="ChEBI" id="CHEBI:145110"/>
        <dbReference type="ChEBI" id="CHEBI:145111"/>
    </reaction>
    <physiologicalReaction direction="left-to-right" evidence="1">
        <dbReference type="Rhea" id="RHEA:62221"/>
    </physiologicalReaction>
</comment>
<comment type="pathway">
    <text evidence="9">Mycotoxin biosynthesis; patulin biosynthesis.</text>
</comment>
<comment type="subcellular location">
    <subcellularLocation>
        <location evidence="1">Cytoplasm</location>
        <location evidence="1">Cytosol</location>
    </subcellularLocation>
</comment>
<comment type="biotechnology">
    <text evidence="4 5 6">Patulin was originally used as an antibiotic and specifically trialed to be used against the common cold, but it is no longer used for that purpose since it has been shown to induce immunological, neurological and gastrointestinal effects (PubMed:15082620). Genotoxic effects of patulin with dose-dependent increase in DNA strand breaks in brain, liver and kidneys have been detected in mice (PubMed:22222931). However, more recently, it has been proposed that patulin might also have anti-tumor properties (PubMed:26619846).</text>
</comment>
<comment type="similarity">
    <text evidence="8">Belongs to the patF family.</text>
</comment>
<evidence type="ECO:0000250" key="1">
    <source>
        <dbReference type="UniProtKB" id="A0A075TR27"/>
    </source>
</evidence>
<evidence type="ECO:0000255" key="2"/>
<evidence type="ECO:0000255" key="3">
    <source>
        <dbReference type="PROSITE-ProRule" id="PRU00498"/>
    </source>
</evidence>
<evidence type="ECO:0000269" key="4">
    <source>
    </source>
</evidence>
<evidence type="ECO:0000269" key="5">
    <source>
    </source>
</evidence>
<evidence type="ECO:0000269" key="6">
    <source>
    </source>
</evidence>
<evidence type="ECO:0000303" key="7">
    <source>
    </source>
</evidence>
<evidence type="ECO:0000305" key="8"/>
<evidence type="ECO:0000305" key="9">
    <source>
    </source>
</evidence>
<gene>
    <name evidence="7" type="primary">patF</name>
    <name type="ORF">ACLA_093610</name>
</gene>
<dbReference type="EC" id="1.-.-.-" evidence="1"/>
<dbReference type="EMBL" id="DS027052">
    <property type="protein sequence ID" value="EAW11662.1"/>
    <property type="molecule type" value="Genomic_DNA"/>
</dbReference>
<dbReference type="RefSeq" id="XP_001273088.1">
    <property type="nucleotide sequence ID" value="XM_001273087.1"/>
</dbReference>
<dbReference type="SMR" id="A1CFL3"/>
<dbReference type="STRING" id="344612.A1CFL3"/>
<dbReference type="GlyCosmos" id="A1CFL3">
    <property type="glycosylation" value="2 sites, No reported glycans"/>
</dbReference>
<dbReference type="EnsemblFungi" id="EAW11662">
    <property type="protein sequence ID" value="EAW11662"/>
    <property type="gene ID" value="ACLA_093610"/>
</dbReference>
<dbReference type="GeneID" id="4704850"/>
<dbReference type="KEGG" id="act:ACLA_093610"/>
<dbReference type="VEuPathDB" id="FungiDB:ACLA_093610"/>
<dbReference type="eggNOG" id="ENOG502RPD2">
    <property type="taxonomic scope" value="Eukaryota"/>
</dbReference>
<dbReference type="HOGENOM" id="CLU_119119_0_0_1"/>
<dbReference type="OMA" id="FTIDYIF"/>
<dbReference type="OrthoDB" id="3814701at2759"/>
<dbReference type="UniPathway" id="UPA00918"/>
<dbReference type="Proteomes" id="UP000006701">
    <property type="component" value="Unassembled WGS sequence"/>
</dbReference>
<dbReference type="GO" id="GO:0005829">
    <property type="term" value="C:cytosol"/>
    <property type="evidence" value="ECO:0000250"/>
    <property type="project" value="GO_Central"/>
</dbReference>
<dbReference type="GO" id="GO:0016491">
    <property type="term" value="F:oxidoreductase activity"/>
    <property type="evidence" value="ECO:0000250"/>
    <property type="project" value="GO_Central"/>
</dbReference>
<dbReference type="GO" id="GO:0140723">
    <property type="term" value="P:patulin biosynthetic process"/>
    <property type="evidence" value="ECO:0000250"/>
    <property type="project" value="GO_Central"/>
</dbReference>
<dbReference type="Gene3D" id="3.10.450.50">
    <property type="match status" value="1"/>
</dbReference>
<dbReference type="InterPro" id="IPR032710">
    <property type="entry name" value="NTF2-like_dom_sf"/>
</dbReference>
<dbReference type="SUPFAM" id="SSF54427">
    <property type="entry name" value="NTF2-like"/>
    <property type="match status" value="1"/>
</dbReference>